<sequence>MRCLNMIMAEPPGLITICLLGYLLGADCTVFLDHEDATKVLSRPKRYNSGKLEEFVQGNLERECMEEKCSFEEAREVFENTEKTTEFWKQYVDGDQCESNPCLNGGICKDDINSYECWCQTGFEGKNCELDVTCNIKNGRCKQFCKLDADNKVVCSCTTGYQLAEDQKSCEPAVPFPCGRVSVPHISTTHTRAETLFLNMDYENSTTDYENSAEAEKNVDNVTQPLNDLTRIVGGKTAKPGQFPWQVLLKGKIDAFCGGSIINEKWVVTAAHCINPDVEITVVAGEHNTEETEHTEQKRNVIRTILHHSYNASVNKYSHDIALLELDEPLTLNSYVTPICVADREYTNTFLKFGYGYVSGWGKVFNKGRPATILQYLKVPLVDRATCLRSTKFTIYNNMFCAGFHEGGKDSCQGDSGGPHVTEVEGINFLTGIISWGEECAMKGKYGIYTKVSRYVNWIKEKTKLT</sequence>
<keyword id="KW-0094">Blood coagulation</keyword>
<keyword id="KW-0106">Calcium</keyword>
<keyword id="KW-0165">Cleavage on pair of basic residues</keyword>
<keyword id="KW-1015">Disulfide bond</keyword>
<keyword id="KW-0245">EGF-like domain</keyword>
<keyword id="KW-0301">Gamma-carboxyglutamic acid</keyword>
<keyword id="KW-0325">Glycoprotein</keyword>
<keyword id="KW-0356">Hemostasis</keyword>
<keyword id="KW-0378">Hydrolase</keyword>
<keyword id="KW-0379">Hydroxylation</keyword>
<keyword id="KW-0460">Magnesium</keyword>
<keyword id="KW-0479">Metal-binding</keyword>
<keyword id="KW-0597">Phosphoprotein</keyword>
<keyword id="KW-0645">Protease</keyword>
<keyword id="KW-1185">Reference proteome</keyword>
<keyword id="KW-0677">Repeat</keyword>
<keyword id="KW-0964">Secreted</keyword>
<keyword id="KW-0720">Serine protease</keyword>
<keyword id="KW-0732">Signal</keyword>
<keyword id="KW-0765">Sulfation</keyword>
<keyword id="KW-0865">Zymogen</keyword>
<evidence type="ECO:0000250" key="1"/>
<evidence type="ECO:0000250" key="2">
    <source>
        <dbReference type="UniProtKB" id="P00740"/>
    </source>
</evidence>
<evidence type="ECO:0000250" key="3">
    <source>
        <dbReference type="UniProtKB" id="P00741"/>
    </source>
</evidence>
<evidence type="ECO:0000255" key="4"/>
<evidence type="ECO:0000255" key="5">
    <source>
        <dbReference type="PROSITE-ProRule" id="PRU00076"/>
    </source>
</evidence>
<evidence type="ECO:0000255" key="6">
    <source>
        <dbReference type="PROSITE-ProRule" id="PRU00274"/>
    </source>
</evidence>
<evidence type="ECO:0000255" key="7">
    <source>
        <dbReference type="PROSITE-ProRule" id="PRU00463"/>
    </source>
</evidence>
<comment type="function">
    <text evidence="2">Factor IX is a vitamin K-dependent plasma protein that participates in the intrinsic pathway of blood coagulation by converting factor X to its active form in the presence of Ca(2+) ions, phospholipids, and factor VIIIa.</text>
</comment>
<comment type="catalytic activity">
    <reaction evidence="2">
        <text>Selective cleavage of Arg-|-Ile bond in factor X to form factor Xa.</text>
        <dbReference type="EC" id="3.4.21.22"/>
    </reaction>
</comment>
<comment type="subunit">
    <text evidence="2">Heterodimer of a light chain and a heavy chain; disulfide-linked. Interacts (inactive and activated) with F11 (activated) in calcium-dependent manner. Interacts with SERPINC1.</text>
</comment>
<comment type="subcellular location">
    <subcellularLocation>
        <location evidence="2">Secreted</location>
    </subcellularLocation>
</comment>
<comment type="domain">
    <text evidence="3">Calcium binds to the gamma-carboxyglutamic acid (Gla) residues in the Gla domain. Calcium can also bind, with stronger affinity, to another site beyond the Gla domain. Under physiological ion concentrations, Ca(2+) is displaced by Mg(2+) from some of the gammaglutamate residues in the N-terminal Gla domain. This leads to a subtle conformation change that may affect the interaction with its binding protein.</text>
</comment>
<comment type="PTM">
    <text evidence="2">The iron and 2-oxoglutarate dependent 3-hydroxylation of aspartate and asparagine is (R) stereospecific within EGF domains.</text>
</comment>
<comment type="PTM">
    <text evidence="2">Activated by factor XIa, which excises the activation peptide. The propeptide can also be removed by snake venom protease (By similarity). Activated by coagulation factor VIIa-tissue factor (F7-F3) complex in calcium-dependent manner (By similarity).</text>
</comment>
<comment type="PTM">
    <text evidence="2">Predominantly O-glucosylated at Ser-99 by POGLUT1 in vitro.</text>
</comment>
<comment type="similarity">
    <text evidence="6">Belongs to the peptidase S1 family.</text>
</comment>
<dbReference type="EC" id="3.4.21.22" evidence="2"/>
<dbReference type="EMBL" id="AY461386">
    <property type="protein sequence ID" value="AAR26346.1"/>
    <property type="molecule type" value="Genomic_DNA"/>
</dbReference>
<dbReference type="EMBL" id="AY461381">
    <property type="protein sequence ID" value="AAR26346.1"/>
    <property type="status" value="JOINED"/>
    <property type="molecule type" value="Genomic_DNA"/>
</dbReference>
<dbReference type="EMBL" id="AY461382">
    <property type="protein sequence ID" value="AAR26346.1"/>
    <property type="status" value="JOINED"/>
    <property type="molecule type" value="Genomic_DNA"/>
</dbReference>
<dbReference type="EMBL" id="AY461383">
    <property type="protein sequence ID" value="AAR26346.1"/>
    <property type="status" value="JOINED"/>
    <property type="molecule type" value="Genomic_DNA"/>
</dbReference>
<dbReference type="EMBL" id="AY461384">
    <property type="protein sequence ID" value="AAR26346.1"/>
    <property type="status" value="JOINED"/>
    <property type="molecule type" value="Genomic_DNA"/>
</dbReference>
<dbReference type="EMBL" id="AY461385">
    <property type="protein sequence ID" value="AAR26346.1"/>
    <property type="status" value="JOINED"/>
    <property type="molecule type" value="Genomic_DNA"/>
</dbReference>
<dbReference type="RefSeq" id="NP_001009377.1">
    <property type="nucleotide sequence ID" value="NM_001009377.3"/>
</dbReference>
<dbReference type="SMR" id="Q6SA95"/>
<dbReference type="FunCoup" id="Q6SA95">
    <property type="interactions" value="9"/>
</dbReference>
<dbReference type="STRING" id="9685.ENSFCAP00000006767"/>
<dbReference type="MEROPS" id="S01.214"/>
<dbReference type="GlyCosmos" id="Q6SA95">
    <property type="glycosylation" value="6 sites, No reported glycans"/>
</dbReference>
<dbReference type="PaxDb" id="9685-ENSFCAP00000006767"/>
<dbReference type="Ensembl" id="ENSFCAT00000007300.6">
    <property type="protein sequence ID" value="ENSFCAP00000006767.3"/>
    <property type="gene ID" value="ENSFCAG00000007298.6"/>
</dbReference>
<dbReference type="GeneID" id="493973"/>
<dbReference type="KEGG" id="fca:493973"/>
<dbReference type="CTD" id="2158"/>
<dbReference type="VGNC" id="VGNC:62029">
    <property type="gene designation" value="F9"/>
</dbReference>
<dbReference type="eggNOG" id="ENOG502QUEV">
    <property type="taxonomic scope" value="Eukaryota"/>
</dbReference>
<dbReference type="GeneTree" id="ENSGT00940000159516"/>
<dbReference type="HOGENOM" id="CLU_006842_19_5_1"/>
<dbReference type="InParanoid" id="Q6SA95"/>
<dbReference type="OMA" id="SYECWCR"/>
<dbReference type="OrthoDB" id="8909918at2759"/>
<dbReference type="Proteomes" id="UP000011712">
    <property type="component" value="Chromosome X"/>
</dbReference>
<dbReference type="Bgee" id="ENSFCAG00000007298">
    <property type="expression patterns" value="Expressed in liver and 4 other cell types or tissues"/>
</dbReference>
<dbReference type="GO" id="GO:0005615">
    <property type="term" value="C:extracellular space"/>
    <property type="evidence" value="ECO:0000250"/>
    <property type="project" value="UniProtKB"/>
</dbReference>
<dbReference type="GO" id="GO:0005509">
    <property type="term" value="F:calcium ion binding"/>
    <property type="evidence" value="ECO:0000250"/>
    <property type="project" value="UniProtKB"/>
</dbReference>
<dbReference type="GO" id="GO:0004175">
    <property type="term" value="F:endopeptidase activity"/>
    <property type="evidence" value="ECO:0000250"/>
    <property type="project" value="UniProtKB"/>
</dbReference>
<dbReference type="GO" id="GO:0004252">
    <property type="term" value="F:serine-type endopeptidase activity"/>
    <property type="evidence" value="ECO:0000318"/>
    <property type="project" value="GO_Central"/>
</dbReference>
<dbReference type="GO" id="GO:0007596">
    <property type="term" value="P:blood coagulation"/>
    <property type="evidence" value="ECO:0000250"/>
    <property type="project" value="UniProtKB"/>
</dbReference>
<dbReference type="GO" id="GO:0006508">
    <property type="term" value="P:proteolysis"/>
    <property type="evidence" value="ECO:0000250"/>
    <property type="project" value="UniProtKB"/>
</dbReference>
<dbReference type="GO" id="GO:0031638">
    <property type="term" value="P:zymogen activation"/>
    <property type="evidence" value="ECO:0000250"/>
    <property type="project" value="UniProtKB"/>
</dbReference>
<dbReference type="CDD" id="cd00054">
    <property type="entry name" value="EGF_CA"/>
    <property type="match status" value="1"/>
</dbReference>
<dbReference type="CDD" id="cd00190">
    <property type="entry name" value="Tryp_SPc"/>
    <property type="match status" value="1"/>
</dbReference>
<dbReference type="FunFam" id="2.10.25.10:FF:000259">
    <property type="entry name" value="Coagulation factor VII"/>
    <property type="match status" value="1"/>
</dbReference>
<dbReference type="FunFam" id="2.10.25.10:FF:000162">
    <property type="entry name" value="Coagulation factor X (Predicted)"/>
    <property type="match status" value="1"/>
</dbReference>
<dbReference type="FunFam" id="2.40.10.10:FF:000003">
    <property type="entry name" value="Transmembrane serine protease 3"/>
    <property type="match status" value="1"/>
</dbReference>
<dbReference type="FunFam" id="4.10.740.10:FF:000001">
    <property type="entry name" value="vitamin K-dependent protein S"/>
    <property type="match status" value="1"/>
</dbReference>
<dbReference type="Gene3D" id="4.10.740.10">
    <property type="entry name" value="Coagulation Factor IX"/>
    <property type="match status" value="1"/>
</dbReference>
<dbReference type="Gene3D" id="2.10.25.10">
    <property type="entry name" value="Laminin"/>
    <property type="match status" value="2"/>
</dbReference>
<dbReference type="Gene3D" id="2.40.10.10">
    <property type="entry name" value="Trypsin-like serine proteases"/>
    <property type="match status" value="2"/>
</dbReference>
<dbReference type="InterPro" id="IPR017857">
    <property type="entry name" value="Coagulation_fac-like_Gla_dom"/>
</dbReference>
<dbReference type="InterPro" id="IPR001881">
    <property type="entry name" value="EGF-like_Ca-bd_dom"/>
</dbReference>
<dbReference type="InterPro" id="IPR000742">
    <property type="entry name" value="EGF-like_dom"/>
</dbReference>
<dbReference type="InterPro" id="IPR000152">
    <property type="entry name" value="EGF-type_Asp/Asn_hydroxyl_site"/>
</dbReference>
<dbReference type="InterPro" id="IPR018097">
    <property type="entry name" value="EGF_Ca-bd_CS"/>
</dbReference>
<dbReference type="InterPro" id="IPR035972">
    <property type="entry name" value="GLA-like_dom_SF"/>
</dbReference>
<dbReference type="InterPro" id="IPR000294">
    <property type="entry name" value="GLA_domain"/>
</dbReference>
<dbReference type="InterPro" id="IPR012224">
    <property type="entry name" value="Pept_S1A_FX"/>
</dbReference>
<dbReference type="InterPro" id="IPR050442">
    <property type="entry name" value="Peptidase_S1_coag_factors"/>
</dbReference>
<dbReference type="InterPro" id="IPR009003">
    <property type="entry name" value="Peptidase_S1_PA"/>
</dbReference>
<dbReference type="InterPro" id="IPR043504">
    <property type="entry name" value="Peptidase_S1_PA_chymotrypsin"/>
</dbReference>
<dbReference type="InterPro" id="IPR001314">
    <property type="entry name" value="Peptidase_S1A"/>
</dbReference>
<dbReference type="InterPro" id="IPR001254">
    <property type="entry name" value="Trypsin_dom"/>
</dbReference>
<dbReference type="InterPro" id="IPR018114">
    <property type="entry name" value="TRYPSIN_HIS"/>
</dbReference>
<dbReference type="InterPro" id="IPR033116">
    <property type="entry name" value="TRYPSIN_SER"/>
</dbReference>
<dbReference type="PANTHER" id="PTHR24278">
    <property type="entry name" value="COAGULATION FACTOR"/>
    <property type="match status" value="1"/>
</dbReference>
<dbReference type="PANTHER" id="PTHR24278:SF31">
    <property type="entry name" value="COAGULATION FACTOR IX"/>
    <property type="match status" value="1"/>
</dbReference>
<dbReference type="Pfam" id="PF00008">
    <property type="entry name" value="EGF"/>
    <property type="match status" value="1"/>
</dbReference>
<dbReference type="Pfam" id="PF14670">
    <property type="entry name" value="FXa_inhibition"/>
    <property type="match status" value="1"/>
</dbReference>
<dbReference type="Pfam" id="PF00594">
    <property type="entry name" value="Gla"/>
    <property type="match status" value="1"/>
</dbReference>
<dbReference type="Pfam" id="PF00089">
    <property type="entry name" value="Trypsin"/>
    <property type="match status" value="1"/>
</dbReference>
<dbReference type="PIRSF" id="PIRSF001143">
    <property type="entry name" value="Factor_X"/>
    <property type="match status" value="1"/>
</dbReference>
<dbReference type="PRINTS" id="PR00722">
    <property type="entry name" value="CHYMOTRYPSIN"/>
</dbReference>
<dbReference type="PRINTS" id="PR00010">
    <property type="entry name" value="EGFBLOOD"/>
</dbReference>
<dbReference type="PRINTS" id="PR00001">
    <property type="entry name" value="GLABLOOD"/>
</dbReference>
<dbReference type="SMART" id="SM00181">
    <property type="entry name" value="EGF"/>
    <property type="match status" value="2"/>
</dbReference>
<dbReference type="SMART" id="SM00179">
    <property type="entry name" value="EGF_CA"/>
    <property type="match status" value="1"/>
</dbReference>
<dbReference type="SMART" id="SM00069">
    <property type="entry name" value="GLA"/>
    <property type="match status" value="1"/>
</dbReference>
<dbReference type="SMART" id="SM00020">
    <property type="entry name" value="Tryp_SPc"/>
    <property type="match status" value="1"/>
</dbReference>
<dbReference type="SUPFAM" id="SSF57196">
    <property type="entry name" value="EGF/Laminin"/>
    <property type="match status" value="1"/>
</dbReference>
<dbReference type="SUPFAM" id="SSF57630">
    <property type="entry name" value="GLA-domain"/>
    <property type="match status" value="1"/>
</dbReference>
<dbReference type="SUPFAM" id="SSF50494">
    <property type="entry name" value="Trypsin-like serine proteases"/>
    <property type="match status" value="1"/>
</dbReference>
<dbReference type="PROSITE" id="PS00010">
    <property type="entry name" value="ASX_HYDROXYL"/>
    <property type="match status" value="1"/>
</dbReference>
<dbReference type="PROSITE" id="PS00022">
    <property type="entry name" value="EGF_1"/>
    <property type="match status" value="1"/>
</dbReference>
<dbReference type="PROSITE" id="PS01186">
    <property type="entry name" value="EGF_2"/>
    <property type="match status" value="2"/>
</dbReference>
<dbReference type="PROSITE" id="PS50026">
    <property type="entry name" value="EGF_3"/>
    <property type="match status" value="1"/>
</dbReference>
<dbReference type="PROSITE" id="PS01187">
    <property type="entry name" value="EGF_CA"/>
    <property type="match status" value="1"/>
</dbReference>
<dbReference type="PROSITE" id="PS00011">
    <property type="entry name" value="GLA_1"/>
    <property type="match status" value="1"/>
</dbReference>
<dbReference type="PROSITE" id="PS50998">
    <property type="entry name" value="GLA_2"/>
    <property type="match status" value="1"/>
</dbReference>
<dbReference type="PROSITE" id="PS50240">
    <property type="entry name" value="TRYPSIN_DOM"/>
    <property type="match status" value="1"/>
</dbReference>
<dbReference type="PROSITE" id="PS00134">
    <property type="entry name" value="TRYPSIN_HIS"/>
    <property type="match status" value="1"/>
</dbReference>
<dbReference type="PROSITE" id="PS00135">
    <property type="entry name" value="TRYPSIN_SER"/>
    <property type="match status" value="1"/>
</dbReference>
<accession>Q6SA95</accession>
<name>FA9_FELCA</name>
<feature type="signal peptide" evidence="4">
    <location>
        <begin position="1"/>
        <end position="25"/>
    </location>
</feature>
<feature type="propeptide" id="PRO_0000027750" evidence="2">
    <location>
        <begin position="26"/>
        <end position="46"/>
    </location>
</feature>
<feature type="chain" id="PRO_0000027751" description="Coagulation factor IX">
    <location>
        <begin position="47"/>
        <end position="466"/>
    </location>
</feature>
<feature type="chain" id="PRO_0000027752" description="Coagulation factor IXa light chain">
    <location>
        <begin position="47"/>
        <end position="192"/>
    </location>
</feature>
<feature type="propeptide" id="PRO_0000027753" description="Activation peptide" evidence="1">
    <location>
        <begin position="193"/>
        <end position="231"/>
    </location>
</feature>
<feature type="chain" id="PRO_0000027754" description="Coagulation factor IXa heavy chain">
    <location>
        <begin position="232"/>
        <end position="466"/>
    </location>
</feature>
<feature type="domain" description="Gla" evidence="7">
    <location>
        <begin position="47"/>
        <end position="92"/>
    </location>
</feature>
<feature type="domain" description="EGF-like 1; calcium-binding" evidence="5">
    <location>
        <begin position="93"/>
        <end position="129"/>
    </location>
</feature>
<feature type="domain" description="EGF-like 2" evidence="5">
    <location>
        <begin position="130"/>
        <end position="171"/>
    </location>
</feature>
<feature type="domain" description="Peptidase S1" evidence="6">
    <location>
        <begin position="232"/>
        <end position="464"/>
    </location>
</feature>
<feature type="active site" description="Charge relay system" evidence="2">
    <location>
        <position position="272"/>
    </location>
</feature>
<feature type="active site" description="Charge relay system" evidence="2">
    <location>
        <position position="320"/>
    </location>
</feature>
<feature type="active site" description="Charge relay system" evidence="2">
    <location>
        <position position="416"/>
    </location>
</feature>
<feature type="binding site" evidence="2">
    <location>
        <position position="47"/>
    </location>
    <ligand>
        <name>Ca(2+)</name>
        <dbReference type="ChEBI" id="CHEBI:29108"/>
        <label>1</label>
    </ligand>
</feature>
<feature type="binding site" evidence="2">
    <location>
        <position position="48"/>
    </location>
    <ligand>
        <name>Ca(2+)</name>
        <dbReference type="ChEBI" id="CHEBI:29108"/>
        <label>2</label>
    </ligand>
</feature>
<feature type="binding site" description="via 4-carboxyglutamate" evidence="2">
    <location>
        <position position="53"/>
    </location>
    <ligand>
        <name>Ca(2+)</name>
        <dbReference type="ChEBI" id="CHEBI:29108"/>
        <label>1</label>
    </ligand>
</feature>
<feature type="binding site" description="via 4-carboxyglutamate" evidence="2">
    <location>
        <position position="53"/>
    </location>
    <ligand>
        <name>Ca(2+)</name>
        <dbReference type="ChEBI" id="CHEBI:29108"/>
        <label>2</label>
    </ligand>
</feature>
<feature type="binding site" description="via 4-carboxyglutamate" evidence="2">
    <location>
        <position position="54"/>
    </location>
    <ligand>
        <name>Ca(2+)</name>
        <dbReference type="ChEBI" id="CHEBI:29108"/>
        <label>2</label>
    </ligand>
</feature>
<feature type="binding site" description="via 4-carboxyglutamate" evidence="2">
    <location>
        <position position="54"/>
    </location>
    <ligand>
        <name>Ca(2+)</name>
        <dbReference type="ChEBI" id="CHEBI:29108"/>
        <label>3</label>
    </ligand>
</feature>
<feature type="binding site" description="via 4-carboxyglutamate" evidence="2">
    <location>
        <position position="61"/>
    </location>
    <ligand>
        <name>Ca(2+)</name>
        <dbReference type="ChEBI" id="CHEBI:29108"/>
        <label>4</label>
    </ligand>
</feature>
<feature type="binding site" description="via 4-carboxyglutamate" evidence="2">
    <location>
        <position position="61"/>
    </location>
    <ligand>
        <name>Mg(2+)</name>
        <dbReference type="ChEBI" id="CHEBI:18420"/>
        <label>1</label>
    </ligand>
</feature>
<feature type="binding site" description="via 4-carboxyglutamate" evidence="2">
    <location>
        <position position="63"/>
    </location>
    <ligand>
        <name>Ca(2+)</name>
        <dbReference type="ChEBI" id="CHEBI:29108"/>
        <label>1</label>
    </ligand>
</feature>
<feature type="binding site" description="via 4-carboxyglutamate" evidence="2">
    <location>
        <position position="63"/>
    </location>
    <ligand>
        <name>Ca(2+)</name>
        <dbReference type="ChEBI" id="CHEBI:29108"/>
        <label>2</label>
    </ligand>
</feature>
<feature type="binding site" description="via 4-carboxyglutamate" evidence="2">
    <location>
        <position position="63"/>
    </location>
    <ligand>
        <name>Ca(2+)</name>
        <dbReference type="ChEBI" id="CHEBI:29108"/>
        <label>3</label>
    </ligand>
</feature>
<feature type="binding site" description="via 4-carboxyglutamate" evidence="2">
    <location>
        <position position="66"/>
    </location>
    <ligand>
        <name>Ca(2+)</name>
        <dbReference type="ChEBI" id="CHEBI:29108"/>
        <label>4</label>
    </ligand>
</feature>
<feature type="binding site" description="via 4-carboxyglutamate" evidence="2">
    <location>
        <position position="66"/>
    </location>
    <ligand>
        <name>Mg(2+)</name>
        <dbReference type="ChEBI" id="CHEBI:18420"/>
        <label>1</label>
    </ligand>
</feature>
<feature type="binding site" description="via 4-carboxyglutamate" evidence="2">
    <location>
        <position position="67"/>
    </location>
    <ligand>
        <name>Ca(2+)</name>
        <dbReference type="ChEBI" id="CHEBI:29108"/>
        <label>1</label>
    </ligand>
</feature>
<feature type="binding site" description="via 4-carboxyglutamate" evidence="2">
    <location>
        <position position="72"/>
    </location>
    <ligand>
        <name>Ca(2+)</name>
        <dbReference type="ChEBI" id="CHEBI:29108"/>
        <label>5</label>
    </ligand>
</feature>
<feature type="binding site" description="via 4-carboxyglutamate" evidence="2">
    <location>
        <position position="72"/>
    </location>
    <ligand>
        <name>Mg(2+)</name>
        <dbReference type="ChEBI" id="CHEBI:18420"/>
        <label>2</label>
    </ligand>
</feature>
<feature type="binding site" description="via 4-carboxyglutamate" evidence="2">
    <location>
        <position position="73"/>
    </location>
    <ligand>
        <name>Ca(2+)</name>
        <dbReference type="ChEBI" id="CHEBI:29108"/>
        <label>2</label>
    </ligand>
</feature>
<feature type="binding site" description="via 4-carboxyglutamate" evidence="2">
    <location>
        <position position="73"/>
    </location>
    <ligand>
        <name>Ca(2+)</name>
        <dbReference type="ChEBI" id="CHEBI:29108"/>
        <label>3</label>
    </ligand>
</feature>
<feature type="binding site" description="via 4-carboxyglutamate" evidence="2">
    <location>
        <position position="76"/>
    </location>
    <ligand>
        <name>Ca(2+)</name>
        <dbReference type="ChEBI" id="CHEBI:29108"/>
        <label>3</label>
    </ligand>
</feature>
<feature type="binding site" description="via 4-carboxyglutamate" evidence="2">
    <location>
        <position position="76"/>
    </location>
    <ligand>
        <name>Ca(2+)</name>
        <dbReference type="ChEBI" id="CHEBI:29108"/>
        <label>5</label>
    </ligand>
</feature>
<feature type="binding site" description="via 4-carboxyglutamate" evidence="2">
    <location>
        <position position="76"/>
    </location>
    <ligand>
        <name>Mg(2+)</name>
        <dbReference type="ChEBI" id="CHEBI:18420"/>
        <label>2</label>
    </ligand>
</feature>
<feature type="binding site" description="via 4-carboxyglutamate" evidence="2">
    <location>
        <position position="82"/>
    </location>
    <ligand>
        <name>Ca(2+)</name>
        <dbReference type="ChEBI" id="CHEBI:29108"/>
        <label>6</label>
    </ligand>
</feature>
<feature type="binding site" description="via 4-carboxyglutamate" evidence="2">
    <location>
        <position position="82"/>
    </location>
    <ligand>
        <name>Mg(2+)</name>
        <dbReference type="ChEBI" id="CHEBI:18420"/>
        <label>3</label>
    </ligand>
</feature>
<feature type="binding site" description="via 4-carboxyglutamate" evidence="2">
    <location>
        <position position="86"/>
    </location>
    <ligand>
        <name>Ca(2+)</name>
        <dbReference type="ChEBI" id="CHEBI:29108"/>
        <label>6</label>
    </ligand>
</feature>
<feature type="binding site" description="via 4-carboxyglutamate" evidence="2">
    <location>
        <position position="86"/>
    </location>
    <ligand>
        <name>Mg(2+)</name>
        <dbReference type="ChEBI" id="CHEBI:18420"/>
        <label>3</label>
    </ligand>
</feature>
<feature type="binding site" evidence="2">
    <location>
        <position position="93"/>
    </location>
    <ligand>
        <name>Ca(2+)</name>
        <dbReference type="ChEBI" id="CHEBI:29108"/>
        <label>7</label>
    </ligand>
</feature>
<feature type="binding site" evidence="2">
    <location>
        <position position="94"/>
    </location>
    <ligand>
        <name>Ca(2+)</name>
        <dbReference type="ChEBI" id="CHEBI:29108"/>
        <label>7</label>
    </ligand>
</feature>
<feature type="binding site" evidence="2">
    <location>
        <position position="96"/>
    </location>
    <ligand>
        <name>Ca(2+)</name>
        <dbReference type="ChEBI" id="CHEBI:29108"/>
        <label>7</label>
    </ligand>
</feature>
<feature type="binding site" evidence="2">
    <location>
        <position position="110"/>
    </location>
    <ligand>
        <name>Ca(2+)</name>
        <dbReference type="ChEBI" id="CHEBI:29108"/>
        <label>7</label>
    </ligand>
</feature>
<feature type="binding site" evidence="2">
    <location>
        <position position="111"/>
    </location>
    <ligand>
        <name>Ca(2+)</name>
        <dbReference type="ChEBI" id="CHEBI:29108"/>
        <label>7</label>
    </ligand>
</feature>
<feature type="binding site" evidence="2">
    <location>
        <position position="286"/>
    </location>
    <ligand>
        <name>Ca(2+)</name>
        <dbReference type="ChEBI" id="CHEBI:29108"/>
        <label>8</label>
    </ligand>
</feature>
<feature type="binding site" evidence="2">
    <location>
        <position position="288"/>
    </location>
    <ligand>
        <name>Ca(2+)</name>
        <dbReference type="ChEBI" id="CHEBI:29108"/>
        <label>8</label>
    </ligand>
</feature>
<feature type="binding site" evidence="2">
    <location>
        <position position="291"/>
    </location>
    <ligand>
        <name>Ca(2+)</name>
        <dbReference type="ChEBI" id="CHEBI:29108"/>
        <label>8</label>
    </ligand>
</feature>
<feature type="binding site" evidence="2">
    <location>
        <position position="293"/>
    </location>
    <ligand>
        <name>Ca(2+)</name>
        <dbReference type="ChEBI" id="CHEBI:29108"/>
        <label>8</label>
    </ligand>
</feature>
<feature type="binding site" evidence="2">
    <location>
        <position position="296"/>
    </location>
    <ligand>
        <name>Ca(2+)</name>
        <dbReference type="ChEBI" id="CHEBI:29108"/>
        <label>8</label>
    </ligand>
</feature>
<feature type="site" description="Cleavage; by factor XIa" evidence="2">
    <location>
        <begin position="192"/>
        <end position="193"/>
    </location>
</feature>
<feature type="site" description="Cleavage; by factor XIa" evidence="2">
    <location>
        <begin position="231"/>
        <end position="232"/>
    </location>
</feature>
<feature type="modified residue" description="4-carboxyglutamate" evidence="3 7">
    <location>
        <position position="53"/>
    </location>
</feature>
<feature type="modified residue" description="4-carboxyglutamate" evidence="3 7">
    <location>
        <position position="54"/>
    </location>
</feature>
<feature type="modified residue" description="4-carboxyglutamate" evidence="3 7">
    <location>
        <position position="61"/>
    </location>
</feature>
<feature type="modified residue" description="4-carboxyglutamate" evidence="3 7">
    <location>
        <position position="63"/>
    </location>
</feature>
<feature type="modified residue" description="4-carboxyglutamate" evidence="3 7">
    <location>
        <position position="66"/>
    </location>
</feature>
<feature type="modified residue" description="4-carboxyglutamate" evidence="3 7">
    <location>
        <position position="67"/>
    </location>
</feature>
<feature type="modified residue" description="4-carboxyglutamate" evidence="3 7">
    <location>
        <position position="72"/>
    </location>
</feature>
<feature type="modified residue" description="4-carboxyglutamate" evidence="3 7">
    <location>
        <position position="73"/>
    </location>
</feature>
<feature type="modified residue" description="4-carboxyglutamate" evidence="3 7">
    <location>
        <position position="76"/>
    </location>
</feature>
<feature type="modified residue" description="4-carboxyglutamate" evidence="3 7">
    <location>
        <position position="79"/>
    </location>
</feature>
<feature type="modified residue" description="4-carboxyglutamate" evidence="3 7">
    <location>
        <position position="82"/>
    </location>
</feature>
<feature type="modified residue" description="4-carboxyglutamate" evidence="3 7">
    <location>
        <position position="86"/>
    </location>
</feature>
<feature type="modified residue" description="(3R)-3-hydroxyaspartate" evidence="2">
    <location>
        <position position="110"/>
    </location>
</feature>
<feature type="modified residue" description="Phosphoserine" evidence="2">
    <location>
        <position position="114"/>
    </location>
</feature>
<feature type="modified residue" description="Sulfotyrosine" evidence="2">
    <location>
        <position position="202"/>
    </location>
</feature>
<feature type="modified residue" description="Phosphoserine" evidence="2">
    <location>
        <position position="205"/>
    </location>
</feature>
<feature type="modified residue" description="Phosphothreonine; alternate" evidence="2">
    <location>
        <position position="206"/>
    </location>
</feature>
<feature type="glycosylation site" description="O-linked (GalNAc...) threonine" evidence="2">
    <location>
        <position position="85"/>
    </location>
</feature>
<feature type="glycosylation site" description="O-linked (Glc...) serine" evidence="2">
    <location>
        <position position="99"/>
    </location>
</feature>
<feature type="glycosylation site" description="O-linked (GalNAc...) threonine; alternate" evidence="2">
    <location>
        <position position="206"/>
    </location>
</feature>
<feature type="glycosylation site" description="N-linked (GlcNAc...) asparagine" evidence="4">
    <location>
        <position position="221"/>
    </location>
</feature>
<feature type="glycosylation site" description="O-linked (GalNAc...) threonine" evidence="2">
    <location>
        <position position="223"/>
    </location>
</feature>
<feature type="glycosylation site" description="O-linked (GalNAc...) threonine" evidence="2">
    <location>
        <position position="230"/>
    </location>
</feature>
<feature type="disulfide bond" evidence="2">
    <location>
        <begin position="64"/>
        <end position="69"/>
    </location>
</feature>
<feature type="disulfide bond" evidence="2">
    <location>
        <begin position="97"/>
        <end position="108"/>
    </location>
</feature>
<feature type="disulfide bond" evidence="2">
    <location>
        <begin position="102"/>
        <end position="117"/>
    </location>
</feature>
<feature type="disulfide bond" evidence="2">
    <location>
        <begin position="119"/>
        <end position="128"/>
    </location>
</feature>
<feature type="disulfide bond" evidence="2">
    <location>
        <begin position="134"/>
        <end position="145"/>
    </location>
</feature>
<feature type="disulfide bond" evidence="2">
    <location>
        <begin position="141"/>
        <end position="155"/>
    </location>
</feature>
<feature type="disulfide bond" evidence="2">
    <location>
        <begin position="157"/>
        <end position="170"/>
    </location>
</feature>
<feature type="disulfide bond" description="Interchain (between light and heavy chains)" evidence="2">
    <location>
        <begin position="178"/>
        <end position="340"/>
    </location>
</feature>
<feature type="disulfide bond" evidence="2">
    <location>
        <begin position="257"/>
        <end position="273"/>
    </location>
</feature>
<feature type="disulfide bond" evidence="2">
    <location>
        <begin position="387"/>
        <end position="401"/>
    </location>
</feature>
<feature type="disulfide bond" evidence="2">
    <location>
        <begin position="412"/>
        <end position="440"/>
    </location>
</feature>
<proteinExistence type="inferred from homology"/>
<gene>
    <name type="primary">F9</name>
</gene>
<reference key="1">
    <citation type="submission" date="2003-11" db="EMBL/GenBank/DDBJ databases">
        <title>Feline factor IX gene.</title>
        <authorList>
            <person name="Boudreaux M.K."/>
            <person name="Goree S.M."/>
        </authorList>
    </citation>
    <scope>NUCLEOTIDE SEQUENCE [GENOMIC DNA]</scope>
</reference>
<protein>
    <recommendedName>
        <fullName>Coagulation factor IX</fullName>
        <ecNumber evidence="2">3.4.21.22</ecNumber>
    </recommendedName>
    <alternativeName>
        <fullName>Christmas factor</fullName>
    </alternativeName>
    <component>
        <recommendedName>
            <fullName>Coagulation factor IXa light chain</fullName>
        </recommendedName>
    </component>
    <component>
        <recommendedName>
            <fullName>Coagulation factor IXa heavy chain</fullName>
        </recommendedName>
    </component>
</protein>
<organism>
    <name type="scientific">Felis catus</name>
    <name type="common">Cat</name>
    <name type="synonym">Felis silvestris catus</name>
    <dbReference type="NCBI Taxonomy" id="9685"/>
    <lineage>
        <taxon>Eukaryota</taxon>
        <taxon>Metazoa</taxon>
        <taxon>Chordata</taxon>
        <taxon>Craniata</taxon>
        <taxon>Vertebrata</taxon>
        <taxon>Euteleostomi</taxon>
        <taxon>Mammalia</taxon>
        <taxon>Eutheria</taxon>
        <taxon>Laurasiatheria</taxon>
        <taxon>Carnivora</taxon>
        <taxon>Feliformia</taxon>
        <taxon>Felidae</taxon>
        <taxon>Felinae</taxon>
        <taxon>Felis</taxon>
    </lineage>
</organism>